<keyword id="KW-0408">Iron</keyword>
<keyword id="KW-1185">Reference proteome</keyword>
<dbReference type="EMBL" id="CP001392">
    <property type="protein sequence ID" value="ACM33380.1"/>
    <property type="molecule type" value="Genomic_DNA"/>
</dbReference>
<dbReference type="RefSeq" id="WP_011805062.1">
    <property type="nucleotide sequence ID" value="NC_011992.1"/>
</dbReference>
<dbReference type="SMR" id="B9MJP2"/>
<dbReference type="KEGG" id="dia:Dtpsy_1924"/>
<dbReference type="eggNOG" id="COG2924">
    <property type="taxonomic scope" value="Bacteria"/>
</dbReference>
<dbReference type="HOGENOM" id="CLU_170994_0_0_4"/>
<dbReference type="Proteomes" id="UP000000450">
    <property type="component" value="Chromosome"/>
</dbReference>
<dbReference type="GO" id="GO:0005829">
    <property type="term" value="C:cytosol"/>
    <property type="evidence" value="ECO:0007669"/>
    <property type="project" value="TreeGrafter"/>
</dbReference>
<dbReference type="GO" id="GO:0005506">
    <property type="term" value="F:iron ion binding"/>
    <property type="evidence" value="ECO:0007669"/>
    <property type="project" value="UniProtKB-UniRule"/>
</dbReference>
<dbReference type="GO" id="GO:0034599">
    <property type="term" value="P:cellular response to oxidative stress"/>
    <property type="evidence" value="ECO:0007669"/>
    <property type="project" value="TreeGrafter"/>
</dbReference>
<dbReference type="FunFam" id="1.10.3880.10:FF:000001">
    <property type="entry name" value="Probable Fe(2+)-trafficking protein"/>
    <property type="match status" value="1"/>
</dbReference>
<dbReference type="Gene3D" id="1.10.3880.10">
    <property type="entry name" value="Fe(II) trafficking protein YggX"/>
    <property type="match status" value="1"/>
</dbReference>
<dbReference type="HAMAP" id="MF_00686">
    <property type="entry name" value="Fe_traffic_YggX"/>
    <property type="match status" value="1"/>
</dbReference>
<dbReference type="InterPro" id="IPR007457">
    <property type="entry name" value="Fe_traffick_prot_YggX"/>
</dbReference>
<dbReference type="InterPro" id="IPR036766">
    <property type="entry name" value="Fe_traffick_prot_YggX_sf"/>
</dbReference>
<dbReference type="NCBIfam" id="NF003817">
    <property type="entry name" value="PRK05408.1"/>
    <property type="match status" value="1"/>
</dbReference>
<dbReference type="PANTHER" id="PTHR36965">
    <property type="entry name" value="FE(2+)-TRAFFICKING PROTEIN-RELATED"/>
    <property type="match status" value="1"/>
</dbReference>
<dbReference type="PANTHER" id="PTHR36965:SF1">
    <property type="entry name" value="FE(2+)-TRAFFICKING PROTEIN-RELATED"/>
    <property type="match status" value="1"/>
</dbReference>
<dbReference type="Pfam" id="PF04362">
    <property type="entry name" value="Iron_traffic"/>
    <property type="match status" value="1"/>
</dbReference>
<dbReference type="PIRSF" id="PIRSF029827">
    <property type="entry name" value="Fe_traffic_YggX"/>
    <property type="match status" value="1"/>
</dbReference>
<dbReference type="SUPFAM" id="SSF111148">
    <property type="entry name" value="YggX-like"/>
    <property type="match status" value="1"/>
</dbReference>
<feature type="chain" id="PRO_1000147763" description="Probable Fe(2+)-trafficking protein">
    <location>
        <begin position="1"/>
        <end position="90"/>
    </location>
</feature>
<protein>
    <recommendedName>
        <fullName evidence="1">Probable Fe(2+)-trafficking protein</fullName>
    </recommendedName>
</protein>
<accession>B9MJP2</accession>
<comment type="function">
    <text evidence="1">Could be a mediator in iron transactions between iron acquisition and iron-requiring processes, such as synthesis and/or repair of Fe-S clusters in biosynthetic enzymes.</text>
</comment>
<comment type="similarity">
    <text evidence="1">Belongs to the Fe(2+)-trafficking protein family.</text>
</comment>
<organism>
    <name type="scientific">Acidovorax ebreus (strain TPSY)</name>
    <name type="common">Diaphorobacter sp. (strain TPSY)</name>
    <dbReference type="NCBI Taxonomy" id="535289"/>
    <lineage>
        <taxon>Bacteria</taxon>
        <taxon>Pseudomonadati</taxon>
        <taxon>Pseudomonadota</taxon>
        <taxon>Betaproteobacteria</taxon>
        <taxon>Burkholderiales</taxon>
        <taxon>Comamonadaceae</taxon>
        <taxon>Diaphorobacter</taxon>
    </lineage>
</organism>
<gene>
    <name type="ordered locus">Dtpsy_1924</name>
</gene>
<sequence length="90" mass="10035">MARTVHCIKLGKEAEGLDFAPYPGDLGKRIYDNVSKQAWADWIKHQTMLVNENRLNLADARARQYLARQMENHFFGSGADAAAGYVPPSA</sequence>
<evidence type="ECO:0000255" key="1">
    <source>
        <dbReference type="HAMAP-Rule" id="MF_00686"/>
    </source>
</evidence>
<reference key="1">
    <citation type="submission" date="2009-01" db="EMBL/GenBank/DDBJ databases">
        <title>Complete sequence of Diaphorobacter sp. TPSY.</title>
        <authorList>
            <consortium name="US DOE Joint Genome Institute"/>
            <person name="Lucas S."/>
            <person name="Copeland A."/>
            <person name="Lapidus A."/>
            <person name="Glavina del Rio T."/>
            <person name="Tice H."/>
            <person name="Bruce D."/>
            <person name="Goodwin L."/>
            <person name="Pitluck S."/>
            <person name="Chertkov O."/>
            <person name="Brettin T."/>
            <person name="Detter J.C."/>
            <person name="Han C."/>
            <person name="Larimer F."/>
            <person name="Land M."/>
            <person name="Hauser L."/>
            <person name="Kyrpides N."/>
            <person name="Mikhailova N."/>
            <person name="Coates J.D."/>
        </authorList>
    </citation>
    <scope>NUCLEOTIDE SEQUENCE [LARGE SCALE GENOMIC DNA]</scope>
    <source>
        <strain>TPSY</strain>
    </source>
</reference>
<name>FETP_ACIET</name>
<proteinExistence type="inferred from homology"/>